<accession>Q9VGZ5</accession>
<accession>C8VV96</accession>
<accession>Q9U450</accession>
<sequence>MEPYWNETNGHAAHPVKYESEAAVSSFPYCTESSLNFSTSATAYSEDDAEYATGRRNKTSRQDPLSHRIIEKRRRDRMNSCLADLSRLIPPQYQRKGRGRIEKTEIIEMAIRHLKHLQSECQQKESDYRSGYMDCMKEAAKFLYDVHMQDFCHRLLGRLQEHIDEMFKTDCYKSTRSCHMPDNVSASSGSPHQAYHPPLCHLRDMLATSASDVEHSQDHNDVKDLSFRNHLNQLQRSQQAAAAAAVAAAAVAVANGSSPASNAGVDSKVPLTNGGGTGGAPPAADNVPSNSTGSGSAAACAGGNSNSSGSNSSNAASSTICPPAGGSCPAKVTPLAAHQQPHQAPVITSTAPHHHHHHTDSSHHDFESSREPILHTDTSNMHSPPPRDLLLQQHPHLAHSHHTQDSLMSVRMRNYSESSHEIEHNNNYKYKNHIKERFVHELHDEETSSEHCPVAAHLQSDHSHLQALSEHSKDGTEPEIAPIMAKKRKLAEAAANGEIPLEVHTESSNAGASSANRLDKPSPSFNFSDIKDIKAELHNGNSNSSPLLAKLSAVAAAGGQLSTPSSTTAPLPPRHTFTVPIFALHGQGNYYVPLNVDYNALVPFLNGMDLLEKSYTSMPVVHPININVNFMPSSPSASLLAAAAAAAVAVGKQQQQQAVVAAGAGLPLSTNSAAAQAAAVAAAAVAKAKLEQAMNQSW</sequence>
<keyword id="KW-0090">Biological rhythms</keyword>
<keyword id="KW-0238">DNA-binding</keyword>
<keyword id="KW-0539">Nucleus</keyword>
<keyword id="KW-1185">Reference proteome</keyword>
<keyword id="KW-0678">Repressor</keyword>
<keyword id="KW-0804">Transcription</keyword>
<keyword id="KW-0805">Transcription regulation</keyword>
<reference evidence="16" key="1">
    <citation type="journal article" date="2000" name="Science">
        <title>The genome sequence of Drosophila melanogaster.</title>
        <authorList>
            <person name="Adams M.D."/>
            <person name="Celniker S.E."/>
            <person name="Holt R.A."/>
            <person name="Evans C.A."/>
            <person name="Gocayne J.D."/>
            <person name="Amanatides P.G."/>
            <person name="Scherer S.E."/>
            <person name="Li P.W."/>
            <person name="Hoskins R.A."/>
            <person name="Galle R.F."/>
            <person name="George R.A."/>
            <person name="Lewis S.E."/>
            <person name="Richards S."/>
            <person name="Ashburner M."/>
            <person name="Henderson S.N."/>
            <person name="Sutton G.G."/>
            <person name="Wortman J.R."/>
            <person name="Yandell M.D."/>
            <person name="Zhang Q."/>
            <person name="Chen L.X."/>
            <person name="Brandon R.C."/>
            <person name="Rogers Y.-H.C."/>
            <person name="Blazej R.G."/>
            <person name="Champe M."/>
            <person name="Pfeiffer B.D."/>
            <person name="Wan K.H."/>
            <person name="Doyle C."/>
            <person name="Baxter E.G."/>
            <person name="Helt G."/>
            <person name="Nelson C.R."/>
            <person name="Miklos G.L.G."/>
            <person name="Abril J.F."/>
            <person name="Agbayani A."/>
            <person name="An H.-J."/>
            <person name="Andrews-Pfannkoch C."/>
            <person name="Baldwin D."/>
            <person name="Ballew R.M."/>
            <person name="Basu A."/>
            <person name="Baxendale J."/>
            <person name="Bayraktaroglu L."/>
            <person name="Beasley E.M."/>
            <person name="Beeson K.Y."/>
            <person name="Benos P.V."/>
            <person name="Berman B.P."/>
            <person name="Bhandari D."/>
            <person name="Bolshakov S."/>
            <person name="Borkova D."/>
            <person name="Botchan M.R."/>
            <person name="Bouck J."/>
            <person name="Brokstein P."/>
            <person name="Brottier P."/>
            <person name="Burtis K.C."/>
            <person name="Busam D.A."/>
            <person name="Butler H."/>
            <person name="Cadieu E."/>
            <person name="Center A."/>
            <person name="Chandra I."/>
            <person name="Cherry J.M."/>
            <person name="Cawley S."/>
            <person name="Dahlke C."/>
            <person name="Davenport L.B."/>
            <person name="Davies P."/>
            <person name="de Pablos B."/>
            <person name="Delcher A."/>
            <person name="Deng Z."/>
            <person name="Mays A.D."/>
            <person name="Dew I."/>
            <person name="Dietz S.M."/>
            <person name="Dodson K."/>
            <person name="Doup L.E."/>
            <person name="Downes M."/>
            <person name="Dugan-Rocha S."/>
            <person name="Dunkov B.C."/>
            <person name="Dunn P."/>
            <person name="Durbin K.J."/>
            <person name="Evangelista C.C."/>
            <person name="Ferraz C."/>
            <person name="Ferriera S."/>
            <person name="Fleischmann W."/>
            <person name="Fosler C."/>
            <person name="Gabrielian A.E."/>
            <person name="Garg N.S."/>
            <person name="Gelbart W.M."/>
            <person name="Glasser K."/>
            <person name="Glodek A."/>
            <person name="Gong F."/>
            <person name="Gorrell J.H."/>
            <person name="Gu Z."/>
            <person name="Guan P."/>
            <person name="Harris M."/>
            <person name="Harris N.L."/>
            <person name="Harvey D.A."/>
            <person name="Heiman T.J."/>
            <person name="Hernandez J.R."/>
            <person name="Houck J."/>
            <person name="Hostin D."/>
            <person name="Houston K.A."/>
            <person name="Howland T.J."/>
            <person name="Wei M.-H."/>
            <person name="Ibegwam C."/>
            <person name="Jalali M."/>
            <person name="Kalush F."/>
            <person name="Karpen G.H."/>
            <person name="Ke Z."/>
            <person name="Kennison J.A."/>
            <person name="Ketchum K.A."/>
            <person name="Kimmel B.E."/>
            <person name="Kodira C.D."/>
            <person name="Kraft C.L."/>
            <person name="Kravitz S."/>
            <person name="Kulp D."/>
            <person name="Lai Z."/>
            <person name="Lasko P."/>
            <person name="Lei Y."/>
            <person name="Levitsky A.A."/>
            <person name="Li J.H."/>
            <person name="Li Z."/>
            <person name="Liang Y."/>
            <person name="Lin X."/>
            <person name="Liu X."/>
            <person name="Mattei B."/>
            <person name="McIntosh T.C."/>
            <person name="McLeod M.P."/>
            <person name="McPherson D."/>
            <person name="Merkulov G."/>
            <person name="Milshina N.V."/>
            <person name="Mobarry C."/>
            <person name="Morris J."/>
            <person name="Moshrefi A."/>
            <person name="Mount S.M."/>
            <person name="Moy M."/>
            <person name="Murphy B."/>
            <person name="Murphy L."/>
            <person name="Muzny D.M."/>
            <person name="Nelson D.L."/>
            <person name="Nelson D.R."/>
            <person name="Nelson K.A."/>
            <person name="Nixon K."/>
            <person name="Nusskern D.R."/>
            <person name="Pacleb J.M."/>
            <person name="Palazzolo M."/>
            <person name="Pittman G.S."/>
            <person name="Pan S."/>
            <person name="Pollard J."/>
            <person name="Puri V."/>
            <person name="Reese M.G."/>
            <person name="Reinert K."/>
            <person name="Remington K."/>
            <person name="Saunders R.D.C."/>
            <person name="Scheeler F."/>
            <person name="Shen H."/>
            <person name="Shue B.C."/>
            <person name="Siden-Kiamos I."/>
            <person name="Simpson M."/>
            <person name="Skupski M.P."/>
            <person name="Smith T.J."/>
            <person name="Spier E."/>
            <person name="Spradling A.C."/>
            <person name="Stapleton M."/>
            <person name="Strong R."/>
            <person name="Sun E."/>
            <person name="Svirskas R."/>
            <person name="Tector C."/>
            <person name="Turner R."/>
            <person name="Venter E."/>
            <person name="Wang A.H."/>
            <person name="Wang X."/>
            <person name="Wang Z.-Y."/>
            <person name="Wassarman D.A."/>
            <person name="Weinstock G.M."/>
            <person name="Weissenbach J."/>
            <person name="Williams S.M."/>
            <person name="Woodage T."/>
            <person name="Worley K.C."/>
            <person name="Wu D."/>
            <person name="Yang S."/>
            <person name="Yao Q.A."/>
            <person name="Ye J."/>
            <person name="Yeh R.-F."/>
            <person name="Zaveri J.S."/>
            <person name="Zhan M."/>
            <person name="Zhang G."/>
            <person name="Zhao Q."/>
            <person name="Zheng L."/>
            <person name="Zheng X.H."/>
            <person name="Zhong F.N."/>
            <person name="Zhong W."/>
            <person name="Zhou X."/>
            <person name="Zhu S.C."/>
            <person name="Zhu X."/>
            <person name="Smith H.O."/>
            <person name="Gibbs R.A."/>
            <person name="Myers E.W."/>
            <person name="Rubin G.M."/>
            <person name="Venter J.C."/>
        </authorList>
    </citation>
    <scope>NUCLEOTIDE SEQUENCE [LARGE SCALE GENOMIC DNA]</scope>
    <source>
        <strain evidence="16">Berkeley</strain>
    </source>
</reference>
<reference evidence="16" key="2">
    <citation type="journal article" date="2002" name="Genome Biol.">
        <title>Annotation of the Drosophila melanogaster euchromatic genome: a systematic review.</title>
        <authorList>
            <person name="Misra S."/>
            <person name="Crosby M.A."/>
            <person name="Mungall C.J."/>
            <person name="Matthews B.B."/>
            <person name="Campbell K.S."/>
            <person name="Hradecky P."/>
            <person name="Huang Y."/>
            <person name="Kaminker J.S."/>
            <person name="Millburn G.H."/>
            <person name="Prochnik S.E."/>
            <person name="Smith C.D."/>
            <person name="Tupy J.L."/>
            <person name="Whitfield E.J."/>
            <person name="Bayraktaroglu L."/>
            <person name="Berman B.P."/>
            <person name="Bettencourt B.R."/>
            <person name="Celniker S.E."/>
            <person name="de Grey A.D.N.J."/>
            <person name="Drysdale R.A."/>
            <person name="Harris N.L."/>
            <person name="Richter J."/>
            <person name="Russo S."/>
            <person name="Schroeder A.J."/>
            <person name="Shu S.Q."/>
            <person name="Stapleton M."/>
            <person name="Yamada C."/>
            <person name="Ashburner M."/>
            <person name="Gelbart W.M."/>
            <person name="Rubin G.M."/>
            <person name="Lewis S.E."/>
        </authorList>
    </citation>
    <scope>GENOME REANNOTATION</scope>
    <source>
        <strain evidence="16">Berkeley</strain>
    </source>
</reference>
<reference evidence="14" key="3">
    <citation type="submission" date="2009-09" db="EMBL/GenBank/DDBJ databases">
        <authorList>
            <person name="Carlson J."/>
            <person name="Booth B."/>
            <person name="Frise E."/>
            <person name="Park S."/>
            <person name="Wan K."/>
            <person name="Yu C."/>
            <person name="Celniker S."/>
        </authorList>
    </citation>
    <scope>NUCLEOTIDE SEQUENCE [LARGE SCALE MRNA]</scope>
    <source>
        <strain evidence="14">Berkeley</strain>
    </source>
</reference>
<reference evidence="13" key="4">
    <citation type="journal article" date="2000" name="Genetics">
        <title>Mutations affecting the development of the peripheral nervous system in Drosophila: a molecular screen for novel proteins.</title>
        <authorList>
            <person name="Prokopenko S.N."/>
            <person name="He Y."/>
            <person name="Lu Y."/>
            <person name="Bellen H.J."/>
        </authorList>
    </citation>
    <scope>NUCLEOTIDE SEQUENCE [MRNA] OF 1-610</scope>
    <scope>TISSUE SPECIFICITY</scope>
</reference>
<reference evidence="12" key="5">
    <citation type="journal article" date="2007" name="Curr. Biol.">
        <title>Clockwork orange encodes a transcriptional repressor important for circadian-clock amplitude in Drosophila.</title>
        <authorList>
            <person name="Lim C."/>
            <person name="Chung B.Y."/>
            <person name="Pitman J.L."/>
            <person name="McGill J.J."/>
            <person name="Pradhan S."/>
            <person name="Lee J."/>
            <person name="Keegan K.P."/>
            <person name="Choe J."/>
            <person name="Allada R."/>
        </authorList>
    </citation>
    <scope>FUNCTION</scope>
    <scope>TISSUE SPECIFICITY</scope>
    <scope>DISRUPTION PHENOTYPE</scope>
</reference>
<reference evidence="12" key="6">
    <citation type="journal article" date="2007" name="Genes Dev.">
        <title>Clockwork Orange is a transcriptional repressor and a new Drosophila circadian pacemaker component.</title>
        <authorList>
            <person name="Kadener S."/>
            <person name="Stoleru D."/>
            <person name="McDonald M."/>
            <person name="Nawathean P."/>
            <person name="Rosbash M."/>
        </authorList>
    </citation>
    <scope>FUNCTION</scope>
    <scope>TISSUE SPECIFICITY</scope>
    <scope>DISRUPTION PHENOTYPE</scope>
</reference>
<reference evidence="12" key="7">
    <citation type="journal article" date="2007" name="Genes Dev.">
        <title>A functional genomics strategy reveals clockwork orange as a transcriptional regulator in the Drosophila circadian clock.</title>
        <authorList>
            <person name="Matsumoto A."/>
            <person name="Ukai-Tadenuma M."/>
            <person name="Yamada R.G."/>
            <person name="Houl J."/>
            <person name="Uno K.D."/>
            <person name="Kasukawa T."/>
            <person name="Dauwalder B."/>
            <person name="Itoh T.Q."/>
            <person name="Takahashi K."/>
            <person name="Ueda R."/>
            <person name="Hardin P.E."/>
            <person name="Tanimura T."/>
            <person name="Ueda H.R."/>
        </authorList>
    </citation>
    <scope>FUNCTION</scope>
    <scope>SUBCELLULAR LOCATION</scope>
    <scope>TISSUE SPECIFICITY</scope>
    <scope>DISRUPTION PHENOTYPE</scope>
</reference>
<reference evidence="12" key="8">
    <citation type="journal article" date="2008" name="J. Biol. Rhythms">
        <title>The clockwork orange Drosophila protein functions as both an activator and a repressor of clock gene expression.</title>
        <authorList>
            <person name="Richier B."/>
            <person name="Michard-Vanhee C."/>
            <person name="Lamouroux A."/>
            <person name="Papin C."/>
            <person name="Rouyer F."/>
        </authorList>
    </citation>
    <scope>FUNCTION</scope>
    <scope>SUBCELLULAR LOCATION</scope>
    <scope>TISSUE SPECIFICITY</scope>
    <scope>DISRUPTION PHENOTYPE</scope>
</reference>
<reference evidence="12" key="9">
    <citation type="journal article" date="2016" name="PLoS Genet.">
        <title>CLOCKWORK ORANGE enhances PERIOD mediated rhythms in transcriptional repression by antagonizing E-box binding by CLOCK-CYCLE.</title>
        <authorList>
            <person name="Zhou J."/>
            <person name="Yu W."/>
            <person name="Hardin P.E."/>
        </authorList>
    </citation>
    <scope>FUNCTION</scope>
    <scope>TISSUE SPECIFICITY</scope>
</reference>
<dbReference type="EMBL" id="AE014297">
    <property type="protein sequence ID" value="AAF54527.2"/>
    <property type="molecule type" value="Genomic_DNA"/>
</dbReference>
<dbReference type="EMBL" id="BT099842">
    <property type="protein sequence ID" value="ACW83550.1"/>
    <property type="status" value="ALT_SEQ"/>
    <property type="molecule type" value="mRNA"/>
</dbReference>
<dbReference type="EMBL" id="AF203477">
    <property type="protein sequence ID" value="AAF24476.1"/>
    <property type="molecule type" value="mRNA"/>
</dbReference>
<dbReference type="RefSeq" id="NP_524775.1">
    <property type="nucleotide sequence ID" value="NM_080036.3"/>
</dbReference>
<dbReference type="FunCoup" id="Q9VGZ5">
    <property type="interactions" value="274"/>
</dbReference>
<dbReference type="IntAct" id="Q9VGZ5">
    <property type="interactions" value="1"/>
</dbReference>
<dbReference type="STRING" id="7227.FBpp0081723"/>
<dbReference type="PaxDb" id="7227-FBpp0081723"/>
<dbReference type="EnsemblMetazoa" id="FBtr0082246">
    <property type="protein sequence ID" value="FBpp0081723"/>
    <property type="gene ID" value="FBgn0259938"/>
</dbReference>
<dbReference type="GeneID" id="44669"/>
<dbReference type="KEGG" id="dme:Dmel_CG17100"/>
<dbReference type="UCSC" id="CG17100-RA">
    <property type="organism name" value="d. melanogaster"/>
</dbReference>
<dbReference type="AGR" id="FB:FBgn0259938"/>
<dbReference type="CTD" id="44669"/>
<dbReference type="FlyBase" id="FBgn0259938">
    <property type="gene designation" value="cwo"/>
</dbReference>
<dbReference type="VEuPathDB" id="VectorBase:FBgn0259938"/>
<dbReference type="eggNOG" id="KOG4304">
    <property type="taxonomic scope" value="Eukaryota"/>
</dbReference>
<dbReference type="GeneTree" id="ENSGT00940000173160"/>
<dbReference type="HOGENOM" id="CLU_412381_0_0_1"/>
<dbReference type="InParanoid" id="Q9VGZ5"/>
<dbReference type="OMA" id="FKNYIQQ"/>
<dbReference type="OrthoDB" id="6371181at2759"/>
<dbReference type="PhylomeDB" id="Q9VGZ5"/>
<dbReference type="Reactome" id="R-DME-432408">
    <property type="pathway name" value="Transcription regulation of cwo gene"/>
</dbReference>
<dbReference type="SignaLink" id="Q9VGZ5"/>
<dbReference type="BioGRID-ORCS" id="44669">
    <property type="hits" value="0 hits in 1 CRISPR screen"/>
</dbReference>
<dbReference type="GenomeRNAi" id="44669"/>
<dbReference type="PRO" id="PR:Q9VGZ5"/>
<dbReference type="Proteomes" id="UP000000803">
    <property type="component" value="Chromosome 3R"/>
</dbReference>
<dbReference type="Bgee" id="FBgn0259938">
    <property type="expression patterns" value="Expressed in adult neuron in arthropod fat body and 282 other cell types or tissues"/>
</dbReference>
<dbReference type="ExpressionAtlas" id="Q9VGZ5">
    <property type="expression patterns" value="baseline and differential"/>
</dbReference>
<dbReference type="GO" id="GO:0005654">
    <property type="term" value="C:nucleoplasm"/>
    <property type="evidence" value="ECO:0000304"/>
    <property type="project" value="Reactome"/>
</dbReference>
<dbReference type="GO" id="GO:0005634">
    <property type="term" value="C:nucleus"/>
    <property type="evidence" value="ECO:0000314"/>
    <property type="project" value="FlyBase"/>
</dbReference>
<dbReference type="GO" id="GO:0003700">
    <property type="term" value="F:DNA-binding transcription factor activity"/>
    <property type="evidence" value="ECO:0000314"/>
    <property type="project" value="FlyBase"/>
</dbReference>
<dbReference type="GO" id="GO:0046983">
    <property type="term" value="F:protein dimerization activity"/>
    <property type="evidence" value="ECO:0007669"/>
    <property type="project" value="InterPro"/>
</dbReference>
<dbReference type="GO" id="GO:0000978">
    <property type="term" value="F:RNA polymerase II cis-regulatory region sequence-specific DNA binding"/>
    <property type="evidence" value="ECO:0000318"/>
    <property type="project" value="GO_Central"/>
</dbReference>
<dbReference type="GO" id="GO:0032922">
    <property type="term" value="P:circadian regulation of gene expression"/>
    <property type="evidence" value="ECO:0000315"/>
    <property type="project" value="FlyBase"/>
</dbReference>
<dbReference type="GO" id="GO:0007623">
    <property type="term" value="P:circadian rhythm"/>
    <property type="evidence" value="ECO:0000315"/>
    <property type="project" value="FlyBase"/>
</dbReference>
<dbReference type="GO" id="GO:0048813">
    <property type="term" value="P:dendrite morphogenesis"/>
    <property type="evidence" value="ECO:0000315"/>
    <property type="project" value="FlyBase"/>
</dbReference>
<dbReference type="GO" id="GO:0000122">
    <property type="term" value="P:negative regulation of transcription by RNA polymerase II"/>
    <property type="evidence" value="ECO:0000314"/>
    <property type="project" value="FlyBase"/>
</dbReference>
<dbReference type="GO" id="GO:0042752">
    <property type="term" value="P:regulation of circadian rhythm"/>
    <property type="evidence" value="ECO:0000315"/>
    <property type="project" value="FlyBase"/>
</dbReference>
<dbReference type="GO" id="GO:0006355">
    <property type="term" value="P:regulation of DNA-templated transcription"/>
    <property type="evidence" value="ECO:0000250"/>
    <property type="project" value="FlyBase"/>
</dbReference>
<dbReference type="GO" id="GO:0050767">
    <property type="term" value="P:regulation of neurogenesis"/>
    <property type="evidence" value="ECO:0000318"/>
    <property type="project" value="GO_Central"/>
</dbReference>
<dbReference type="CDD" id="cd11440">
    <property type="entry name" value="bHLH-O_Cwo_like"/>
    <property type="match status" value="1"/>
</dbReference>
<dbReference type="FunFam" id="4.10.280.10:FF:000079">
    <property type="entry name" value="CLUMA_CG001539, isoform A"/>
    <property type="match status" value="1"/>
</dbReference>
<dbReference type="Gene3D" id="4.10.280.10">
    <property type="entry name" value="Helix-loop-helix DNA-binding domain"/>
    <property type="match status" value="1"/>
</dbReference>
<dbReference type="InterPro" id="IPR011598">
    <property type="entry name" value="bHLH_dom"/>
</dbReference>
<dbReference type="InterPro" id="IPR050370">
    <property type="entry name" value="HES_HEY"/>
</dbReference>
<dbReference type="InterPro" id="IPR036638">
    <property type="entry name" value="HLH_DNA-bd_sf"/>
</dbReference>
<dbReference type="InterPro" id="IPR003650">
    <property type="entry name" value="Orange_dom"/>
</dbReference>
<dbReference type="PANTHER" id="PTHR10985">
    <property type="entry name" value="BASIC HELIX-LOOP-HELIX TRANSCRIPTION FACTOR, HES-RELATED"/>
    <property type="match status" value="1"/>
</dbReference>
<dbReference type="Pfam" id="PF07527">
    <property type="entry name" value="Hairy_orange"/>
    <property type="match status" value="1"/>
</dbReference>
<dbReference type="Pfam" id="PF00010">
    <property type="entry name" value="HLH"/>
    <property type="match status" value="1"/>
</dbReference>
<dbReference type="SMART" id="SM00353">
    <property type="entry name" value="HLH"/>
    <property type="match status" value="1"/>
</dbReference>
<dbReference type="SMART" id="SM00511">
    <property type="entry name" value="ORANGE"/>
    <property type="match status" value="1"/>
</dbReference>
<dbReference type="SUPFAM" id="SSF47459">
    <property type="entry name" value="HLH, helix-loop-helix DNA-binding domain"/>
    <property type="match status" value="1"/>
</dbReference>
<dbReference type="SUPFAM" id="SSF158457">
    <property type="entry name" value="Orange domain-like"/>
    <property type="match status" value="1"/>
</dbReference>
<dbReference type="PROSITE" id="PS50888">
    <property type="entry name" value="BHLH"/>
    <property type="match status" value="1"/>
</dbReference>
<dbReference type="PROSITE" id="PS51054">
    <property type="entry name" value="ORANGE"/>
    <property type="match status" value="1"/>
</dbReference>
<gene>
    <name evidence="15" type="primary">cwo</name>
    <name evidence="15" type="ORF">CG17100</name>
</gene>
<evidence type="ECO:0000255" key="1"/>
<evidence type="ECO:0000255" key="2">
    <source>
        <dbReference type="PROSITE-ProRule" id="PRU00380"/>
    </source>
</evidence>
<evidence type="ECO:0000255" key="3">
    <source>
        <dbReference type="PROSITE-ProRule" id="PRU00981"/>
    </source>
</evidence>
<evidence type="ECO:0000256" key="4">
    <source>
        <dbReference type="SAM" id="MobiDB-lite"/>
    </source>
</evidence>
<evidence type="ECO:0000269" key="5">
    <source>
    </source>
</evidence>
<evidence type="ECO:0000269" key="6">
    <source>
    </source>
</evidence>
<evidence type="ECO:0000269" key="7">
    <source>
    </source>
</evidence>
<evidence type="ECO:0000269" key="8">
    <source>
    </source>
</evidence>
<evidence type="ECO:0000269" key="9">
    <source>
    </source>
</evidence>
<evidence type="ECO:0000269" key="10">
    <source>
    </source>
</evidence>
<evidence type="ECO:0000303" key="11">
    <source>
    </source>
</evidence>
<evidence type="ECO:0000305" key="12"/>
<evidence type="ECO:0000312" key="13">
    <source>
        <dbReference type="EMBL" id="AAF24476.1"/>
    </source>
</evidence>
<evidence type="ECO:0000312" key="14">
    <source>
        <dbReference type="EMBL" id="ACW83550.1"/>
    </source>
</evidence>
<evidence type="ECO:0000312" key="15">
    <source>
        <dbReference type="FlyBase" id="FBgn0259938"/>
    </source>
</evidence>
<evidence type="ECO:0000312" key="16">
    <source>
        <dbReference type="Proteomes" id="UP000000803"/>
    </source>
</evidence>
<proteinExistence type="evidence at protein level"/>
<organism evidence="16">
    <name type="scientific">Drosophila melanogaster</name>
    <name type="common">Fruit fly</name>
    <dbReference type="NCBI Taxonomy" id="7227"/>
    <lineage>
        <taxon>Eukaryota</taxon>
        <taxon>Metazoa</taxon>
        <taxon>Ecdysozoa</taxon>
        <taxon>Arthropoda</taxon>
        <taxon>Hexapoda</taxon>
        <taxon>Insecta</taxon>
        <taxon>Pterygota</taxon>
        <taxon>Neoptera</taxon>
        <taxon>Endopterygota</taxon>
        <taxon>Diptera</taxon>
        <taxon>Brachycera</taxon>
        <taxon>Muscomorpha</taxon>
        <taxon>Ephydroidea</taxon>
        <taxon>Drosophilidae</taxon>
        <taxon>Drosophila</taxon>
        <taxon>Sophophora</taxon>
    </lineage>
</organism>
<name>CWO_DROME</name>
<feature type="chain" id="PRO_0000438924" description="Transcription factor cwo">
    <location>
        <begin position="1"/>
        <end position="698"/>
    </location>
</feature>
<feature type="domain" description="bHLH" evidence="3">
    <location>
        <begin position="62"/>
        <end position="117"/>
    </location>
</feature>
<feature type="domain" description="Orange" evidence="2">
    <location>
        <begin position="128"/>
        <end position="159"/>
    </location>
</feature>
<feature type="region of interest" description="Basic motif; degenerate" evidence="3">
    <location>
        <begin position="62"/>
        <end position="75"/>
    </location>
</feature>
<feature type="region of interest" description="Helix-loop-helix motif" evidence="3">
    <location>
        <begin position="76"/>
        <end position="117"/>
    </location>
</feature>
<feature type="region of interest" description="Disordered" evidence="4">
    <location>
        <begin position="257"/>
        <end position="319"/>
    </location>
</feature>
<feature type="region of interest" description="Disordered" evidence="4">
    <location>
        <begin position="349"/>
        <end position="369"/>
    </location>
</feature>
<feature type="compositionally biased region" description="Low complexity" evidence="4">
    <location>
        <begin position="280"/>
        <end position="318"/>
    </location>
</feature>
<feature type="compositionally biased region" description="Basic and acidic residues" evidence="4">
    <location>
        <begin position="359"/>
        <end position="369"/>
    </location>
</feature>
<comment type="function">
    <text evidence="6 7 8 9 10">Plays a role in the regulation of circadian rhythms (PubMed:17555964, PubMed:17578907, PubMed:17578908, PubMed:27814361). Transcriptional repressor which inhibits Clock-mediated transcriptional activation by binding to E boxes in the promoters of Clock target genes and repressing their transcription (PubMed:17555964, PubMed:17578907, PubMed:17578908, PubMed:27814361). E box binding activity is time-dependent with higher binding activity seen in the early morning (zeitgeber time 2) than early evening (zeitgeber time 14) and is dependent on the presence of the circadian protein per (PubMed:27814361). It is likely that per binds to Clock-cycle heterodimers, reducing their affinity for E box binding and allowing cwo to bind instead (PubMed:27814361). Negatively regulates its own expression (PubMed:17578908, PubMed:18375860).</text>
</comment>
<comment type="subcellular location">
    <subcellularLocation>
        <location evidence="1 8 9">Nucleus</location>
    </subcellularLocation>
</comment>
<comment type="tissue specificity">
    <text evidence="5 6 7 8 9 10">Expressed in adult brain where it is detected in the dorsal lateral neurons, small and large ventral lateral neurons and dorsal neurons 1, 2 and 3 (at protein level) (PubMed:17578908). Expressed at constant levels in a 12 hour light / 12 hour day cycle (at protein level) (PubMed:27814361). Strongly expressed in pacemaker neurons (PubMed:17578907). In adults, mRNA expression oscillates in a circadian manner with a peak at around 14 hour Zeitgeber time (PubMed:17578907). mRNA levels oscillate in a rhythmic manner in both 12 hour light / 12 hour dark and constant dark conditions with a morning peak around the time of lights-on and an evening peak around the time of lights-off in light/dark conditions (PubMed:17555964, PubMed:17578908, PubMed:18375860). During stage 8 of embryonic development, expressed in the anterior and posterior midgut primordia and expression in the gut continues throughout embryonic development (PubMed:11102367). During germ band retraction, expression is initiated in many tissues in a prominent segmentally repeated pattern (PubMed:11102367). Later, expression is ubiquitous but has higher levels in segmentally repeated clusters of cells (PubMed:11102367). Expression is also found in cells of the amnioserosa, in the head region, in posterior spiracles and in tracheal trees (PubMed:11102367).</text>
</comment>
<comment type="disruption phenotype">
    <text evidence="6 7 8 9">Strong circadian locomotor phenotype with most mutants being arrhythmic after 4 days in constant darkness and displaying a long period in both light/dark and constant dark conditions (PubMed:17578907). Delayed evening activity peak in light/dark conditions and robust 26.5 hour rhythms for at least 10 days in constant darkness (PubMed:18375860). Reduced circadian oscillation of Clk target genes per, tim, vri and Pdp1 (PubMed:17578907, PubMed:18375860). RNAi-mediated knockdown results in a lengthened circadian period (PubMed:17555964, PubMed:17578908).</text>
</comment>
<comment type="miscellaneous">
    <text evidence="11">The name 'clockwork orange' is based on the Anthony Burgess novel of the same name and derives from the potential clock function and the presence of an Orange domain.</text>
</comment>
<comment type="caution">
    <text evidence="3">Contains a degenerate basic motif not likely to bind DNA.</text>
</comment>
<comment type="sequence caution" evidence="12">
    <conflict type="erroneous translation">
        <sequence resource="EMBL-CDS" id="ACW83550"/>
    </conflict>
    <text>Wrong choice of frame.</text>
</comment>
<protein>
    <recommendedName>
        <fullName evidence="12">Transcription factor cwo</fullName>
    </recommendedName>
    <alternativeName>
        <fullName evidence="11">Protein clockwork orange</fullName>
    </alternativeName>
</protein>